<accession>Q9Y6H5</accession>
<accession>D3DSZ1</accession>
<accession>Q05BS1</accession>
<accession>Q1PSC2</accession>
<accession>Q49AC6</accession>
<accession>Q504U9</accession>
<accession>Q6L984</accession>
<accession>Q6L985</accession>
<accession>Q6L986</accession>
<accession>Q9HC59</accession>
<reference key="1">
    <citation type="journal article" date="1999" name="Nat. Genet.">
        <title>Synphilin-1 associates with alpha-synuclein and promotes the formation of cytosolic inclusions.</title>
        <authorList>
            <person name="Engelender S."/>
            <person name="Kaminsky Z."/>
            <person name="Guo X."/>
            <person name="Sharp A.H."/>
            <person name="Amaravi R.K."/>
            <person name="Kleiderlein J.J."/>
            <person name="Margolis R.L."/>
            <person name="Troncoso J.C."/>
            <person name="Lanahan A."/>
            <person name="Worley P.F."/>
            <person name="Dawson V.L."/>
            <person name="Dawson T.M."/>
            <person name="Ross C.A."/>
        </authorList>
    </citation>
    <scope>NUCLEOTIDE SEQUENCE [MRNA] (ISOFORM 1)</scope>
    <scope>INTERACTION WITH SNCA</scope>
    <scope>SUBCELLULAR LOCATION</scope>
    <scope>TISSUE SPECIFICITY</scope>
    <scope>VARIANT ALA-44</scope>
    <source>
        <tissue>Brain</tissue>
    </source>
</reference>
<reference key="2">
    <citation type="journal article" date="2000" name="Mamm. Genome">
        <title>Organization of the human synphilin-1 gene, a candidate for Parkinson's disease.</title>
        <authorList>
            <person name="Engelender S."/>
            <person name="Wanner T."/>
            <person name="Kleiderlein J.J."/>
            <person name="Wakabayashi K."/>
            <person name="Tsuji S."/>
            <person name="Takahashi H."/>
            <person name="Ashworth R."/>
            <person name="Margolis R.L."/>
            <person name="Ross C.A."/>
        </authorList>
    </citation>
    <scope>NUCLEOTIDE SEQUENCE [GENOMIC DNA] (ISOFORM 1)</scope>
</reference>
<reference key="3">
    <citation type="journal article" date="2006" name="Proc. Natl. Acad. Sci. U.S.A.">
        <title>Synphilin-1A: an aggregation-prone isoform of synphilin-1 that causes neuronal death and is present in aggregates from alpha-synucleinopathy patients.</title>
        <authorList>
            <person name="Eyal A."/>
            <person name="Szargel R."/>
            <person name="Avraham E."/>
            <person name="Liani E."/>
            <person name="Haskin J."/>
            <person name="Rott R."/>
            <person name="Engelender S."/>
        </authorList>
    </citation>
    <scope>NUCLEOTIDE SEQUENCE [MRNA] (ISOFORM 2)</scope>
    <scope>FUNCTION</scope>
    <scope>INTERACTION WITH SNCA</scope>
    <scope>SUBCELLULAR LOCATION</scope>
    <scope>TISSUE SPECIFICITY</scope>
</reference>
<reference key="4">
    <citation type="submission" date="2003-05" db="EMBL/GenBank/DDBJ databases">
        <title>Identification and characterization of alternatively spliced form of human synphilin-1.</title>
        <authorList>
            <person name="Lim M.K."/>
            <person name="Ohsawa Y."/>
            <person name="Kawamura T."/>
            <person name="Asakawa S."/>
            <person name="Takayanagi A."/>
            <person name="Minoshima S."/>
            <person name="Shimizu N."/>
        </authorList>
    </citation>
    <scope>NUCLEOTIDE SEQUENCE [MRNA] (ISOFORMS 1; 4 AND 6)</scope>
    <scope>VARIANT ALA-44</scope>
    <source>
        <tissue>Cerebellum</tissue>
        <tissue>Testis</tissue>
    </source>
</reference>
<reference key="5">
    <citation type="submission" date="2005-09" db="EMBL/GenBank/DDBJ databases">
        <authorList>
            <person name="Mural R.J."/>
            <person name="Istrail S."/>
            <person name="Sutton G.G."/>
            <person name="Florea L."/>
            <person name="Halpern A.L."/>
            <person name="Mobarry C.M."/>
            <person name="Lippert R."/>
            <person name="Walenz B."/>
            <person name="Shatkay H."/>
            <person name="Dew I."/>
            <person name="Miller J.R."/>
            <person name="Flanigan M.J."/>
            <person name="Edwards N.J."/>
            <person name="Bolanos R."/>
            <person name="Fasulo D."/>
            <person name="Halldorsson B.V."/>
            <person name="Hannenhalli S."/>
            <person name="Turner R."/>
            <person name="Yooseph S."/>
            <person name="Lu F."/>
            <person name="Nusskern D.R."/>
            <person name="Shue B.C."/>
            <person name="Zheng X.H."/>
            <person name="Zhong F."/>
            <person name="Delcher A.L."/>
            <person name="Huson D.H."/>
            <person name="Kravitz S.A."/>
            <person name="Mouchard L."/>
            <person name="Reinert K."/>
            <person name="Remington K.A."/>
            <person name="Clark A.G."/>
            <person name="Waterman M.S."/>
            <person name="Eichler E.E."/>
            <person name="Adams M.D."/>
            <person name="Hunkapiller M.W."/>
            <person name="Myers E.W."/>
            <person name="Venter J.C."/>
        </authorList>
    </citation>
    <scope>NUCLEOTIDE SEQUENCE [LARGE SCALE GENOMIC DNA]</scope>
</reference>
<reference key="6">
    <citation type="journal article" date="2004" name="Genome Res.">
        <title>The status, quality, and expansion of the NIH full-length cDNA project: the Mammalian Gene Collection (MGC).</title>
        <authorList>
            <consortium name="The MGC Project Team"/>
        </authorList>
    </citation>
    <scope>NUCLEOTIDE SEQUENCE [LARGE SCALE MRNA] (ISOFORMS 2; 3 AND 5)</scope>
    <source>
        <tissue>Brain</tissue>
        <tissue>Testis</tissue>
    </source>
</reference>
<reference key="7">
    <citation type="journal article" date="2001" name="Nat. Med.">
        <title>Parkin ubiquitinates the alpha-synuclein-interacting protein, synphilin-1: implications for Lewy-body formation in Parkinson disease.</title>
        <authorList>
            <person name="Chung K.K.K."/>
            <person name="Zhang Y."/>
            <person name="Lim K.L."/>
            <person name="Tanaka Y."/>
            <person name="Huang H."/>
            <person name="Gao J."/>
            <person name="Ross C.A."/>
            <person name="Dawson V.L."/>
            <person name="Dawson T.M."/>
        </authorList>
    </citation>
    <scope>INTERACTION WITH PRKN</scope>
    <scope>UBIQUITINATION</scope>
</reference>
<reference key="8">
    <citation type="journal article" date="2003" name="J. Biol. Chem.">
        <title>Dorfin localizes to Lewy bodies and ubiquitylates synphilin-1.</title>
        <authorList>
            <person name="Ito T."/>
            <person name="Niwa J."/>
            <person name="Hishikawa N."/>
            <person name="Ishigaki S."/>
            <person name="Doyu M."/>
            <person name="Sobue G."/>
        </authorList>
    </citation>
    <scope>INTERACTION WITH RNF19A</scope>
    <scope>UBIQUITINATION</scope>
</reference>
<reference key="9">
    <citation type="journal article" date="2003" name="J. Biol. Chem.">
        <title>Siah-1 facilitates ubiquitination and degradation of synphilin-1.</title>
        <authorList>
            <person name="Nagano Y."/>
            <person name="Yamashita H."/>
            <person name="Takahashi T."/>
            <person name="Kishida S."/>
            <person name="Nakamura T."/>
            <person name="Iseki E."/>
            <person name="Hattori N."/>
            <person name="Mizuno Y."/>
            <person name="Kikuchi A."/>
            <person name="Matsumoto M."/>
        </authorList>
    </citation>
    <scope>INTERACTION WITH SIAH1</scope>
    <scope>DEGRADATION</scope>
</reference>
<reference key="10">
    <citation type="journal article" date="2004" name="Proc. Natl. Acad. Sci. U.S.A.">
        <title>Ubiquitylation of synphilin-1 and alpha-synuclein by SIAH and its presence in cellular inclusions and Lewy bodies imply a role in Parkinson's disease.</title>
        <authorList>
            <person name="Liani E."/>
            <person name="Eyal A."/>
            <person name="Avraham E."/>
            <person name="Shemer R."/>
            <person name="Szargel R."/>
            <person name="Berg D."/>
            <person name="Bornemann A."/>
            <person name="Riess O."/>
            <person name="Ross C.A."/>
            <person name="Rott R."/>
            <person name="Engelender S."/>
        </authorList>
    </citation>
    <scope>SUBCELLULAR LOCATION</scope>
    <scope>UBIQUITINATION</scope>
    <scope>PROTEASOMAL DEGRADATION</scope>
    <scope>INTERACTION WITH SIAH1 AND SIAH2</scope>
    <scope>MUTAGENESIS OF VAL-79 AND PRO-81</scope>
</reference>
<reference key="11">
    <citation type="journal article" date="2009" name="J. Biol. Chem.">
        <title>Synphilin-1A inhibits seven in absentia homolog (SIAH) and modulates alpha-synuclein monoubiquitylation and inclusion formation.</title>
        <authorList>
            <person name="Szargel R."/>
            <person name="Rott R."/>
            <person name="Eyal A."/>
            <person name="Haskin J."/>
            <person name="Shani V."/>
            <person name="Balan L."/>
            <person name="Wolosker H."/>
            <person name="Engelender S."/>
        </authorList>
    </citation>
    <scope>FUNCTION</scope>
    <scope>INTERACTION WITH SIAH1</scope>
</reference>
<reference key="12">
    <citation type="journal article" date="2010" name="FASEB J.">
        <title>Interaction with synphilin-1 promotes inclusion formation of alpha-synuclein: mechanistic insights and pathological implication.</title>
        <authorList>
            <person name="Xie Y.Y."/>
            <person name="Zhou C.J."/>
            <person name="Zhou Z.R."/>
            <person name="Hong J."/>
            <person name="Che M.X."/>
            <person name="Fu Q.S."/>
            <person name="Song A.X."/>
            <person name="Lin D.H."/>
            <person name="Hu H.Y."/>
        </authorList>
    </citation>
    <scope>STRUCTURE BY NMR OF 512-557</scope>
    <scope>INTERACTION WITH SNCA</scope>
    <scope>PROMOTION OF INCLUSION BODY FORMATION</scope>
    <scope>SUBCELLULAR LOCATION</scope>
</reference>
<reference key="13">
    <citation type="journal article" date="2003" name="Hum. Mol. Genet.">
        <title>Identification and functional characterization of a novel R621C mutation in the synphilin-1 gene in Parkinson's disease.</title>
        <authorList>
            <person name="Marx F.P."/>
            <person name="Holzmann C."/>
            <person name="Strauss K.M."/>
            <person name="Li L."/>
            <person name="Eberhardt O."/>
            <person name="Gerhardt E."/>
            <person name="Cookson M.R."/>
            <person name="Hernandez D."/>
            <person name="Farrer M.J."/>
            <person name="Kachergus J."/>
            <person name="Engelender S."/>
            <person name="Ross C.A."/>
            <person name="Berger K."/>
            <person name="Schols L."/>
            <person name="Schulz J.B."/>
            <person name="Riess O."/>
            <person name="Kruger R."/>
        </authorList>
    </citation>
    <scope>VARIANT CYS-621</scope>
    <scope>CHARACTERIZATION OF VARIANT CYS-621</scope>
    <scope>POSSIBLE INVOLVEMENT IN SUSCEPTIBILITY TO PARKINSON DISEASE</scope>
</reference>
<reference key="14">
    <citation type="journal article" date="2008" name="BMC Med. Genet.">
        <title>Genetic association study of synphilin-1 in idiopathic Parkinson's disease.</title>
        <authorList>
            <person name="Myhre R."/>
            <person name="Klungland H."/>
            <person name="Farrer M.J."/>
            <person name="Aasly J.O."/>
        </authorList>
    </citation>
    <scope>VARIANTS ALA-44; CYS-621 AND GLN-706</scope>
    <scope>LACK OF ASSOCIATION WITH PARKINSON DISEASE</scope>
</reference>
<dbReference type="EMBL" id="AF076929">
    <property type="protein sequence ID" value="AAD30362.1"/>
    <property type="molecule type" value="mRNA"/>
</dbReference>
<dbReference type="EMBL" id="AF167306">
    <property type="protein sequence ID" value="AAG17478.1"/>
    <property type="molecule type" value="Genomic_DNA"/>
</dbReference>
<dbReference type="EMBL" id="AF167301">
    <property type="protein sequence ID" value="AAG17478.1"/>
    <property type="status" value="JOINED"/>
    <property type="molecule type" value="Genomic_DNA"/>
</dbReference>
<dbReference type="EMBL" id="AF167302">
    <property type="protein sequence ID" value="AAG17478.1"/>
    <property type="status" value="JOINED"/>
    <property type="molecule type" value="Genomic_DNA"/>
</dbReference>
<dbReference type="EMBL" id="AF167303">
    <property type="protein sequence ID" value="AAG17478.1"/>
    <property type="status" value="JOINED"/>
    <property type="molecule type" value="Genomic_DNA"/>
</dbReference>
<dbReference type="EMBL" id="AF167304">
    <property type="protein sequence ID" value="AAG17478.1"/>
    <property type="status" value="JOINED"/>
    <property type="molecule type" value="Genomic_DNA"/>
</dbReference>
<dbReference type="EMBL" id="AF167305">
    <property type="protein sequence ID" value="AAG17478.1"/>
    <property type="status" value="JOINED"/>
    <property type="molecule type" value="Genomic_DNA"/>
</dbReference>
<dbReference type="EMBL" id="DQ227317">
    <property type="protein sequence ID" value="ABB51162.1"/>
    <property type="molecule type" value="mRNA"/>
</dbReference>
<dbReference type="EMBL" id="CH471086">
    <property type="protein sequence ID" value="EAW48889.1"/>
    <property type="molecule type" value="Genomic_DNA"/>
</dbReference>
<dbReference type="EMBL" id="AB110788">
    <property type="protein sequence ID" value="BAD19017.1"/>
    <property type="molecule type" value="mRNA"/>
</dbReference>
<dbReference type="EMBL" id="AB110789">
    <property type="protein sequence ID" value="BAD19018.1"/>
    <property type="molecule type" value="mRNA"/>
</dbReference>
<dbReference type="EMBL" id="AB110790">
    <property type="protein sequence ID" value="BAD19019.1"/>
    <property type="molecule type" value="mRNA"/>
</dbReference>
<dbReference type="EMBL" id="CH471086">
    <property type="protein sequence ID" value="EAW48890.1"/>
    <property type="molecule type" value="Genomic_DNA"/>
</dbReference>
<dbReference type="EMBL" id="BC033743">
    <property type="protein sequence ID" value="AAH33743.1"/>
    <property type="molecule type" value="mRNA"/>
</dbReference>
<dbReference type="EMBL" id="BC040552">
    <property type="protein sequence ID" value="AAH40552.1"/>
    <property type="molecule type" value="mRNA"/>
</dbReference>
<dbReference type="EMBL" id="BC094759">
    <property type="protein sequence ID" value="AAH94759.1"/>
    <property type="molecule type" value="mRNA"/>
</dbReference>
<dbReference type="CCDS" id="CCDS4131.1">
    <molecule id="Q9Y6H5-1"/>
</dbReference>
<dbReference type="CCDS" id="CCDS78054.1">
    <molecule id="Q9Y6H5-3"/>
</dbReference>
<dbReference type="RefSeq" id="NP_001229864.1">
    <molecule id="Q9Y6H5-2"/>
    <property type="nucleotide sequence ID" value="NM_001242935.3"/>
</dbReference>
<dbReference type="RefSeq" id="NP_001295029.1">
    <molecule id="Q9Y6H5-3"/>
    <property type="nucleotide sequence ID" value="NM_001308100.2"/>
</dbReference>
<dbReference type="RefSeq" id="NP_001295034.1">
    <molecule id="Q9Y6H5-4"/>
    <property type="nucleotide sequence ID" value="NM_001308105.1"/>
</dbReference>
<dbReference type="RefSeq" id="NP_001295035.1">
    <property type="nucleotide sequence ID" value="NM_001308106.1"/>
</dbReference>
<dbReference type="RefSeq" id="NP_001295036.1">
    <molecule id="Q9Y6H5-5"/>
    <property type="nucleotide sequence ID" value="NM_001308107.2"/>
</dbReference>
<dbReference type="RefSeq" id="NP_001295037.1">
    <property type="nucleotide sequence ID" value="NM_001308108.1"/>
</dbReference>
<dbReference type="RefSeq" id="NP_001295038.1">
    <property type="nucleotide sequence ID" value="NM_001308109.1"/>
</dbReference>
<dbReference type="RefSeq" id="NP_005451.2">
    <molecule id="Q9Y6H5-1"/>
    <property type="nucleotide sequence ID" value="NM_005460.4"/>
</dbReference>
<dbReference type="RefSeq" id="XP_011542039.1">
    <molecule id="Q9Y6H5-3"/>
    <property type="nucleotide sequence ID" value="XM_011543737.3"/>
</dbReference>
<dbReference type="RefSeq" id="XP_011542040.1">
    <molecule id="Q9Y6H5-3"/>
    <property type="nucleotide sequence ID" value="XM_011543738.3"/>
</dbReference>
<dbReference type="RefSeq" id="XP_011542041.1">
    <molecule id="Q9Y6H5-3"/>
    <property type="nucleotide sequence ID" value="XM_011543739.2"/>
</dbReference>
<dbReference type="RefSeq" id="XP_011542043.1">
    <molecule id="Q9Y6H5-3"/>
    <property type="nucleotide sequence ID" value="XM_011543741.3"/>
</dbReference>
<dbReference type="RefSeq" id="XP_011542045.1">
    <molecule id="Q9Y6H5-3"/>
    <property type="nucleotide sequence ID" value="XM_011543743.3"/>
</dbReference>
<dbReference type="RefSeq" id="XP_016865567.1">
    <property type="nucleotide sequence ID" value="XM_017010078.1"/>
</dbReference>
<dbReference type="RefSeq" id="XP_016865571.1">
    <molecule id="Q9Y6H5-1"/>
    <property type="nucleotide sequence ID" value="XM_017010082.2"/>
</dbReference>
<dbReference type="RefSeq" id="XP_024302035.1">
    <molecule id="Q9Y6H5-1"/>
    <property type="nucleotide sequence ID" value="XM_024446267.2"/>
</dbReference>
<dbReference type="RefSeq" id="XP_024302036.1">
    <molecule id="Q9Y6H5-1"/>
    <property type="nucleotide sequence ID" value="XM_024446268.2"/>
</dbReference>
<dbReference type="RefSeq" id="XP_047273867.1">
    <molecule id="Q9Y6H5-3"/>
    <property type="nucleotide sequence ID" value="XM_047417911.1"/>
</dbReference>
<dbReference type="RefSeq" id="XP_047273879.1">
    <molecule id="Q9Y6H5-1"/>
    <property type="nucleotide sequence ID" value="XM_047417923.1"/>
</dbReference>
<dbReference type="RefSeq" id="XP_047273880.1">
    <molecule id="Q9Y6H5-1"/>
    <property type="nucleotide sequence ID" value="XM_047417924.1"/>
</dbReference>
<dbReference type="RefSeq" id="XP_047273881.1">
    <molecule id="Q9Y6H5-1"/>
    <property type="nucleotide sequence ID" value="XM_047417925.1"/>
</dbReference>
<dbReference type="RefSeq" id="XP_047273882.1">
    <molecule id="Q9Y6H5-1"/>
    <property type="nucleotide sequence ID" value="XM_047417926.1"/>
</dbReference>
<dbReference type="RefSeq" id="XP_047273883.1">
    <molecule id="Q9Y6H5-1"/>
    <property type="nucleotide sequence ID" value="XM_047417927.1"/>
</dbReference>
<dbReference type="RefSeq" id="XP_047273885.1">
    <molecule id="Q9Y6H5-6"/>
    <property type="nucleotide sequence ID" value="XM_047417929.1"/>
</dbReference>
<dbReference type="RefSeq" id="XP_054209830.1">
    <molecule id="Q9Y6H5-3"/>
    <property type="nucleotide sequence ID" value="XM_054353855.1"/>
</dbReference>
<dbReference type="RefSeq" id="XP_054209831.1">
    <molecule id="Q9Y6H5-3"/>
    <property type="nucleotide sequence ID" value="XM_054353856.1"/>
</dbReference>
<dbReference type="RefSeq" id="XP_054209832.1">
    <molecule id="Q9Y6H5-3"/>
    <property type="nucleotide sequence ID" value="XM_054353857.1"/>
</dbReference>
<dbReference type="RefSeq" id="XP_054209833.1">
    <molecule id="Q9Y6H5-3"/>
    <property type="nucleotide sequence ID" value="XM_054353858.1"/>
</dbReference>
<dbReference type="RefSeq" id="XP_054209834.1">
    <molecule id="Q9Y6H5-3"/>
    <property type="nucleotide sequence ID" value="XM_054353859.1"/>
</dbReference>
<dbReference type="RefSeq" id="XP_054209852.1">
    <molecule id="Q9Y6H5-1"/>
    <property type="nucleotide sequence ID" value="XM_054353877.1"/>
</dbReference>
<dbReference type="RefSeq" id="XP_054209853.1">
    <molecule id="Q9Y6H5-1"/>
    <property type="nucleotide sequence ID" value="XM_054353878.1"/>
</dbReference>
<dbReference type="RefSeq" id="XP_054209854.1">
    <molecule id="Q9Y6H5-1"/>
    <property type="nucleotide sequence ID" value="XM_054353879.1"/>
</dbReference>
<dbReference type="RefSeq" id="XP_054209855.1">
    <molecule id="Q9Y6H5-1"/>
    <property type="nucleotide sequence ID" value="XM_054353880.1"/>
</dbReference>
<dbReference type="RefSeq" id="XP_054209856.1">
    <molecule id="Q9Y6H5-1"/>
    <property type="nucleotide sequence ID" value="XM_054353881.1"/>
</dbReference>
<dbReference type="RefSeq" id="XP_054209857.1">
    <molecule id="Q9Y6H5-1"/>
    <property type="nucleotide sequence ID" value="XM_054353882.1"/>
</dbReference>
<dbReference type="RefSeq" id="XP_054209858.1">
    <molecule id="Q9Y6H5-1"/>
    <property type="nucleotide sequence ID" value="XM_054353883.1"/>
</dbReference>
<dbReference type="RefSeq" id="XP_054209859.1">
    <molecule id="Q9Y6H5-1"/>
    <property type="nucleotide sequence ID" value="XM_054353884.1"/>
</dbReference>
<dbReference type="RefSeq" id="XP_054209864.1">
    <molecule id="Q9Y6H5-6"/>
    <property type="nucleotide sequence ID" value="XM_054353889.1"/>
</dbReference>
<dbReference type="PDB" id="2KES">
    <property type="method" value="NMR"/>
    <property type="chains" value="A=512-557"/>
</dbReference>
<dbReference type="PDBsum" id="2KES"/>
<dbReference type="BMRB" id="Q9Y6H5"/>
<dbReference type="SMR" id="Q9Y6H5"/>
<dbReference type="BioGRID" id="114986">
    <property type="interactions" value="37"/>
</dbReference>
<dbReference type="CORUM" id="Q9Y6H5"/>
<dbReference type="DIP" id="DIP-61155N"/>
<dbReference type="FunCoup" id="Q9Y6H5">
    <property type="interactions" value="232"/>
</dbReference>
<dbReference type="IntAct" id="Q9Y6H5">
    <property type="interactions" value="22"/>
</dbReference>
<dbReference type="MINT" id="Q9Y6H5"/>
<dbReference type="STRING" id="9606.ENSP00000261367"/>
<dbReference type="ChEMBL" id="CHEMBL1926494"/>
<dbReference type="GlyGen" id="Q9Y6H5">
    <property type="glycosylation" value="1 site, 1 O-linked glycan (1 site)"/>
</dbReference>
<dbReference type="iPTMnet" id="Q9Y6H5"/>
<dbReference type="PhosphoSitePlus" id="Q9Y6H5"/>
<dbReference type="BioMuta" id="SNCAIP"/>
<dbReference type="DMDM" id="205831000"/>
<dbReference type="jPOST" id="Q9Y6H5"/>
<dbReference type="MassIVE" id="Q9Y6H5"/>
<dbReference type="PaxDb" id="9606-ENSP00000261368"/>
<dbReference type="PeptideAtlas" id="Q9Y6H5"/>
<dbReference type="ProteomicsDB" id="86680">
    <molecule id="Q9Y6H5-1"/>
</dbReference>
<dbReference type="ProteomicsDB" id="86681">
    <molecule id="Q9Y6H5-2"/>
</dbReference>
<dbReference type="ProteomicsDB" id="86682">
    <molecule id="Q9Y6H5-3"/>
</dbReference>
<dbReference type="ProteomicsDB" id="86683">
    <molecule id="Q9Y6H5-4"/>
</dbReference>
<dbReference type="ProteomicsDB" id="86684">
    <molecule id="Q9Y6H5-5"/>
</dbReference>
<dbReference type="ProteomicsDB" id="86685">
    <molecule id="Q9Y6H5-6"/>
</dbReference>
<dbReference type="Antibodypedia" id="1015">
    <property type="antibodies" value="225 antibodies from 33 providers"/>
</dbReference>
<dbReference type="DNASU" id="9627"/>
<dbReference type="Ensembl" id="ENST00000261367.11">
    <molecule id="Q9Y6H5-3"/>
    <property type="protein sequence ID" value="ENSP00000261367.7"/>
    <property type="gene ID" value="ENSG00000064692.20"/>
</dbReference>
<dbReference type="Ensembl" id="ENST00000261368.13">
    <molecule id="Q9Y6H5-1"/>
    <property type="protein sequence ID" value="ENSP00000261368.8"/>
    <property type="gene ID" value="ENSG00000064692.20"/>
</dbReference>
<dbReference type="Ensembl" id="ENST00000395469.6">
    <molecule id="Q9Y6H5-6"/>
    <property type="protein sequence ID" value="ENSP00000378852.2"/>
    <property type="gene ID" value="ENSG00000064692.20"/>
</dbReference>
<dbReference type="GeneID" id="9627"/>
<dbReference type="KEGG" id="hsa:9627"/>
<dbReference type="MANE-Select" id="ENST00000261368.13">
    <property type="protein sequence ID" value="ENSP00000261368.8"/>
    <property type="RefSeq nucleotide sequence ID" value="NM_005460.4"/>
    <property type="RefSeq protein sequence ID" value="NP_005451.2"/>
</dbReference>
<dbReference type="UCSC" id="uc003ksw.2">
    <molecule id="Q9Y6H5-1"/>
    <property type="organism name" value="human"/>
</dbReference>
<dbReference type="AGR" id="HGNC:11139"/>
<dbReference type="CTD" id="9627"/>
<dbReference type="DisGeNET" id="9627"/>
<dbReference type="GeneCards" id="SNCAIP"/>
<dbReference type="HGNC" id="HGNC:11139">
    <property type="gene designation" value="SNCAIP"/>
</dbReference>
<dbReference type="HPA" id="ENSG00000064692">
    <property type="expression patterns" value="Tissue enhanced (cervix, endometrium, ovary)"/>
</dbReference>
<dbReference type="MalaCards" id="SNCAIP"/>
<dbReference type="MIM" id="168600">
    <property type="type" value="phenotype"/>
</dbReference>
<dbReference type="MIM" id="603779">
    <property type="type" value="gene"/>
</dbReference>
<dbReference type="neXtProt" id="NX_Q9Y6H5"/>
<dbReference type="OpenTargets" id="ENSG00000064692"/>
<dbReference type="PharmGKB" id="PA35987"/>
<dbReference type="VEuPathDB" id="HostDB:ENSG00000064692"/>
<dbReference type="eggNOG" id="KOG0504">
    <property type="taxonomic scope" value="Eukaryota"/>
</dbReference>
<dbReference type="GeneTree" id="ENSGT00390000001485"/>
<dbReference type="HOGENOM" id="CLU_012404_0_0_1"/>
<dbReference type="InParanoid" id="Q9Y6H5"/>
<dbReference type="OMA" id="SQTQYCV"/>
<dbReference type="OrthoDB" id="10057496at2759"/>
<dbReference type="PAN-GO" id="Q9Y6H5">
    <property type="GO annotations" value="1 GO annotation based on evolutionary models"/>
</dbReference>
<dbReference type="PhylomeDB" id="Q9Y6H5"/>
<dbReference type="TreeFam" id="TF329095"/>
<dbReference type="PathwayCommons" id="Q9Y6H5"/>
<dbReference type="Reactome" id="R-HSA-977225">
    <molecule id="Q9Y6H5-2"/>
    <property type="pathway name" value="Amyloid fiber formation"/>
</dbReference>
<dbReference type="SignaLink" id="Q9Y6H5"/>
<dbReference type="SIGNOR" id="Q9Y6H5"/>
<dbReference type="BioGRID-ORCS" id="9627">
    <property type="hits" value="11 hits in 1148 CRISPR screens"/>
</dbReference>
<dbReference type="ChiTaRS" id="SNCAIP">
    <property type="organism name" value="human"/>
</dbReference>
<dbReference type="EvolutionaryTrace" id="Q9Y6H5"/>
<dbReference type="GeneWiki" id="SNCAIP"/>
<dbReference type="GenomeRNAi" id="9627"/>
<dbReference type="Pharos" id="Q9Y6H5">
    <property type="development level" value="Tbio"/>
</dbReference>
<dbReference type="PRO" id="PR:Q9Y6H5"/>
<dbReference type="Proteomes" id="UP000005640">
    <property type="component" value="Chromosome 5"/>
</dbReference>
<dbReference type="RNAct" id="Q9Y6H5">
    <property type="molecule type" value="protein"/>
</dbReference>
<dbReference type="Bgee" id="ENSG00000064692">
    <property type="expression patterns" value="Expressed in ventricular zone and 174 other cell types or tissues"/>
</dbReference>
<dbReference type="ExpressionAtlas" id="Q9Y6H5">
    <property type="expression patterns" value="baseline and differential"/>
</dbReference>
<dbReference type="GO" id="GO:0005737">
    <property type="term" value="C:cytoplasm"/>
    <property type="evidence" value="ECO:0000314"/>
    <property type="project" value="MGI"/>
</dbReference>
<dbReference type="GO" id="GO:0036464">
    <property type="term" value="C:cytoplasmic ribonucleoprotein granule"/>
    <property type="evidence" value="ECO:0000314"/>
    <property type="project" value="HPA"/>
</dbReference>
<dbReference type="GO" id="GO:0005829">
    <property type="term" value="C:cytosol"/>
    <property type="evidence" value="ECO:0000304"/>
    <property type="project" value="Reactome"/>
</dbReference>
<dbReference type="GO" id="GO:0043025">
    <property type="term" value="C:neuronal cell body"/>
    <property type="evidence" value="ECO:0000303"/>
    <property type="project" value="UniProtKB"/>
</dbReference>
<dbReference type="GO" id="GO:0005654">
    <property type="term" value="C:nucleoplasm"/>
    <property type="evidence" value="ECO:0000314"/>
    <property type="project" value="HPA"/>
</dbReference>
<dbReference type="GO" id="GO:0042734">
    <property type="term" value="C:presynaptic membrane"/>
    <property type="evidence" value="ECO:0000303"/>
    <property type="project" value="UniProtKB"/>
</dbReference>
<dbReference type="GO" id="GO:0008021">
    <property type="term" value="C:synaptic vesicle"/>
    <property type="evidence" value="ECO:0000304"/>
    <property type="project" value="ParkinsonsUK-UCL"/>
</dbReference>
<dbReference type="GO" id="GO:0042802">
    <property type="term" value="F:identical protein binding"/>
    <property type="evidence" value="ECO:0000353"/>
    <property type="project" value="IntAct"/>
</dbReference>
<dbReference type="GO" id="GO:0031625">
    <property type="term" value="F:ubiquitin protein ligase binding"/>
    <property type="evidence" value="ECO:0000353"/>
    <property type="project" value="UniProtKB"/>
</dbReference>
<dbReference type="GO" id="GO:0008219">
    <property type="term" value="P:cell death"/>
    <property type="evidence" value="ECO:0000314"/>
    <property type="project" value="CACAO"/>
</dbReference>
<dbReference type="GO" id="GO:0042417">
    <property type="term" value="P:dopamine metabolic process"/>
    <property type="evidence" value="ECO:0000314"/>
    <property type="project" value="MGI"/>
</dbReference>
<dbReference type="GO" id="GO:0090083">
    <property type="term" value="P:regulation of inclusion body assembly"/>
    <property type="evidence" value="ECO:0000314"/>
    <property type="project" value="BHF-UCL"/>
</dbReference>
<dbReference type="GO" id="GO:0046928">
    <property type="term" value="P:regulation of neurotransmitter secretion"/>
    <property type="evidence" value="ECO:0000314"/>
    <property type="project" value="MGI"/>
</dbReference>
<dbReference type="FunFam" id="1.25.40.20:FF:000112">
    <property type="entry name" value="synphilin-1 isoform X1"/>
    <property type="match status" value="1"/>
</dbReference>
<dbReference type="Gene3D" id="6.10.250.750">
    <property type="match status" value="1"/>
</dbReference>
<dbReference type="Gene3D" id="1.25.40.20">
    <property type="entry name" value="Ankyrin repeat-containing domain"/>
    <property type="match status" value="1"/>
</dbReference>
<dbReference type="InterPro" id="IPR002110">
    <property type="entry name" value="Ankyrin_rpt"/>
</dbReference>
<dbReference type="InterPro" id="IPR036770">
    <property type="entry name" value="Ankyrin_rpt-contain_sf"/>
</dbReference>
<dbReference type="InterPro" id="IPR040133">
    <property type="entry name" value="SNCAIP"/>
</dbReference>
<dbReference type="InterPro" id="IPR032027">
    <property type="entry name" value="SNCAIP_SNCA-bd"/>
</dbReference>
<dbReference type="PANTHER" id="PTHR22882">
    <property type="entry name" value="SYNPHILIN-1"/>
    <property type="match status" value="1"/>
</dbReference>
<dbReference type="PANTHER" id="PTHR22882:SF3">
    <property type="entry name" value="SYNPHILIN-1"/>
    <property type="match status" value="1"/>
</dbReference>
<dbReference type="Pfam" id="PF12796">
    <property type="entry name" value="Ank_2"/>
    <property type="match status" value="2"/>
</dbReference>
<dbReference type="Pfam" id="PF16700">
    <property type="entry name" value="SNCAIP_SNCA_bd"/>
    <property type="match status" value="1"/>
</dbReference>
<dbReference type="SMART" id="SM00248">
    <property type="entry name" value="ANK"/>
    <property type="match status" value="4"/>
</dbReference>
<dbReference type="SUPFAM" id="SSF48403">
    <property type="entry name" value="Ankyrin repeat"/>
    <property type="match status" value="1"/>
</dbReference>
<dbReference type="PROSITE" id="PS50297">
    <property type="entry name" value="ANK_REP_REGION"/>
    <property type="match status" value="1"/>
</dbReference>
<dbReference type="PROSITE" id="PS50088">
    <property type="entry name" value="ANK_REPEAT"/>
    <property type="match status" value="1"/>
</dbReference>
<feature type="chain" id="PRO_0000067068" description="Synphilin-1">
    <location>
        <begin position="1"/>
        <end position="919"/>
    </location>
</feature>
<feature type="repeat" description="ANK 1">
    <location>
        <begin position="349"/>
        <end position="380"/>
    </location>
</feature>
<feature type="repeat" description="ANK 2">
    <location>
        <begin position="384"/>
        <end position="413"/>
    </location>
</feature>
<feature type="repeat" description="ANK 3">
    <location>
        <begin position="419"/>
        <end position="448"/>
    </location>
</feature>
<feature type="repeat" description="ANK 4">
    <location>
        <begin position="456"/>
        <end position="485"/>
    </location>
</feature>
<feature type="repeat" description="ANK 5">
    <location>
        <begin position="603"/>
        <end position="632"/>
    </location>
</feature>
<feature type="repeat" description="ANK 6">
    <location>
        <begin position="699"/>
        <end position="729"/>
    </location>
</feature>
<feature type="region of interest" description="Disordered" evidence="2">
    <location>
        <begin position="80"/>
        <end position="99"/>
    </location>
</feature>
<feature type="region of interest" description="Disordered" evidence="2">
    <location>
        <begin position="108"/>
        <end position="140"/>
    </location>
</feature>
<feature type="region of interest" description="Disordered" evidence="2">
    <location>
        <begin position="287"/>
        <end position="313"/>
    </location>
</feature>
<feature type="region of interest" description="Disordered" evidence="2">
    <location>
        <begin position="549"/>
        <end position="615"/>
    </location>
</feature>
<feature type="region of interest" description="Disordered" evidence="2">
    <location>
        <begin position="666"/>
        <end position="713"/>
    </location>
</feature>
<feature type="region of interest" description="Disordered" evidence="2">
    <location>
        <begin position="728"/>
        <end position="919"/>
    </location>
</feature>
<feature type="coiled-coil region" evidence="1">
    <location>
        <begin position="515"/>
        <end position="552"/>
    </location>
</feature>
<feature type="compositionally biased region" description="Polar residues" evidence="2">
    <location>
        <begin position="299"/>
        <end position="308"/>
    </location>
</feature>
<feature type="compositionally biased region" description="Low complexity" evidence="2">
    <location>
        <begin position="555"/>
        <end position="571"/>
    </location>
</feature>
<feature type="compositionally biased region" description="Low complexity" evidence="2">
    <location>
        <begin position="667"/>
        <end position="685"/>
    </location>
</feature>
<feature type="compositionally biased region" description="Basic and acidic residues" evidence="2">
    <location>
        <begin position="686"/>
        <end position="700"/>
    </location>
</feature>
<feature type="compositionally biased region" description="Low complexity" evidence="2">
    <location>
        <begin position="774"/>
        <end position="785"/>
    </location>
</feature>
<feature type="compositionally biased region" description="Basic and acidic residues" evidence="2">
    <location>
        <begin position="833"/>
        <end position="842"/>
    </location>
</feature>
<feature type="compositionally biased region" description="Polar residues" evidence="2">
    <location>
        <begin position="844"/>
        <end position="854"/>
    </location>
</feature>
<feature type="compositionally biased region" description="Low complexity" evidence="2">
    <location>
        <begin position="874"/>
        <end position="886"/>
    </location>
</feature>
<feature type="splice variant" id="VSP_038839" description="In isoform 2 and isoform 5." evidence="14 15">
    <location>
        <begin position="1"/>
        <end position="366"/>
    </location>
</feature>
<feature type="splice variant" id="VSP_038840" description="In isoform 3 and isoform 6." evidence="14 16">
    <original>S</original>
    <variation>SDNRSQGNRLQKLGLEDTDREDAMGFGSHRAKLTVVAALGACHCPENE</variation>
    <location>
        <position position="19"/>
    </location>
</feature>
<feature type="splice variant" id="VSP_038841" description="In isoform 4." evidence="16">
    <location>
        <begin position="335"/>
        <end position="394"/>
    </location>
</feature>
<feature type="splice variant" id="VSP_038842" description="In isoform 2 and isoform 5." evidence="14 15">
    <original>QHLTSLMGEDCLNERNTEKLTPAGLAIK</original>
    <variation>MTYLIQSHHSRRSQNCAEDVIRKTKTDQ</variation>
    <location>
        <begin position="367"/>
        <end position="394"/>
    </location>
</feature>
<feature type="splice variant" id="VSP_038843" description="In isoform 6." evidence="16">
    <original>LVEYGANVTMQNHAGEKPSQSAERQGHTLCSRYLVVVETCMSLASQVVKLTKQLKEQTVERVTLQN</original>
    <variation>RLKIQGTWNGSETCLFTHHFSSYPPISSGLQCQGQEGVLFIPDQVGAATNKQVLFQNQLPETKSSY</variation>
    <location>
        <begin position="476"/>
        <end position="541"/>
    </location>
</feature>
<feature type="splice variant" id="VSP_038844" description="In isoform 6." evidence="16">
    <location>
        <begin position="542"/>
        <end position="919"/>
    </location>
</feature>
<feature type="splice variant" id="VSP_038845" description="In isoform 2 and isoform 3." evidence="14 15">
    <original>A</original>
    <variation>EMYSSCINLSSNMLIEEHLCNDTRHNDINRKMKKSYSIKHIAEPESKELFL</variation>
    <location>
        <position position="919"/>
    </location>
</feature>
<feature type="sequence variant" id="VAR_065358" description="In dbSNP:rs56285021." evidence="3 10 13">
    <original>V</original>
    <variation>A</variation>
    <location>
        <position position="44"/>
    </location>
</feature>
<feature type="sequence variant" id="VAR_048312" description="In dbSNP:rs6867105.">
    <original>E</original>
    <variation>G</variation>
    <location>
        <position position="235"/>
    </location>
</feature>
<feature type="sequence variant" id="VAR_025667" description="Found in patients with symptoms of Parkinson disease; uncertain significance; reduced number of cytoplasmic inclusions in cells expressing C-621 compared with cells expressing wild-type (wt) protein when subjected to proteasomal inhibition; C-621 transfected cells are more susceptible to staurosporine-induced cell death than cells expressing wt protein; dbSNP:rs28937592." evidence="6 10">
    <original>R</original>
    <variation>C</variation>
    <location>
        <position position="621"/>
    </location>
</feature>
<feature type="sequence variant" id="VAR_065359" evidence="10">
    <original>E</original>
    <variation>Q</variation>
    <location>
        <position position="706"/>
    </location>
</feature>
<feature type="mutagenesis site" description="Decreases interaction with SIAH1 and formation of cytoplasmic inclusion bodies; when associated with N-81." evidence="8">
    <original>V</original>
    <variation>N</variation>
    <location>
        <position position="79"/>
    </location>
</feature>
<feature type="mutagenesis site" description="Decreases interaction with SIAH1 and formation of cytoplasmic inclusion bodies; when associated with N-79." evidence="8">
    <original>P</original>
    <variation>N</variation>
    <location>
        <position position="81"/>
    </location>
</feature>
<feature type="sequence conflict" description="In Ref. 6; AAH40552." evidence="17" ref="6">
    <original>S</original>
    <variation>F</variation>
    <location>
        <position position="188"/>
    </location>
</feature>
<feature type="sequence conflict" description="In Ref. 6; AAH40552." evidence="17" ref="6">
    <original>E</original>
    <variation>G</variation>
    <location>
        <position position="614"/>
    </location>
</feature>
<feature type="sequence conflict" description="In Ref. 6; AAH40552." evidence="17" ref="6">
    <original>A</original>
    <variation>G</variation>
    <location>
        <position position="696"/>
    </location>
</feature>
<feature type="sequence conflict" description="In Ref. 6; AAH94759." evidence="17" ref="6">
    <original>D</original>
    <variation>G</variation>
    <location>
        <position position="712"/>
    </location>
</feature>
<feature type="sequence conflict" description="In Ref. 6; AAH33743." evidence="17" ref="6">
    <original>S</original>
    <variation>P</variation>
    <location>
        <position position="801"/>
    </location>
</feature>
<feature type="sequence conflict" description="In Ref. 6; AAH94759." evidence="17" ref="6">
    <original>A</original>
    <variation>E</variation>
    <location>
        <position position="919"/>
    </location>
</feature>
<feature type="helix" evidence="18">
    <location>
        <begin position="512"/>
        <end position="554"/>
    </location>
</feature>
<protein>
    <recommendedName>
        <fullName>Synphilin-1</fullName>
        <shortName>Sph1</shortName>
    </recommendedName>
    <alternativeName>
        <fullName>Alpha-synuclein-interacting protein</fullName>
    </alternativeName>
</protein>
<keyword id="KW-0002">3D-structure</keyword>
<keyword id="KW-0025">Alternative splicing</keyword>
<keyword id="KW-0040">ANK repeat</keyword>
<keyword id="KW-0175">Coiled coil</keyword>
<keyword id="KW-0963">Cytoplasm</keyword>
<keyword id="KW-0523">Neurodegeneration</keyword>
<keyword id="KW-0907">Parkinson disease</keyword>
<keyword id="KW-0908">Parkinsonism</keyword>
<keyword id="KW-1267">Proteomics identification</keyword>
<keyword id="KW-1185">Reference proteome</keyword>
<keyword id="KW-0677">Repeat</keyword>
<keyword id="KW-0832">Ubl conjugation</keyword>
<comment type="function">
    <text evidence="9 11">Isoform 2 inhibits the ubiquitin ligase activity of SIAH1 and inhibits proteasomal degradation of target proteins. Isoform 2 inhibits autoubiquitination and proteasomal degradation of SIAH1, and thereby increases cellular levels of SIAH. Isoform 2 modulates SNCA monoubiquitination by SIAH1.</text>
</comment>
<comment type="subunit">
    <text evidence="3 4 5 7 8 9 11 12 17">Homodimer (Probable). Heterodimer of isoform 1 and isoform 2 (Probable). Interacts with SIAH1, SIAH2, SNCA, RNF19A and PRKN. Isoform 2 has a strong tendency to form aggregates and can sequester isoform 1.</text>
</comment>
<comment type="interaction">
    <interactant intactId="EBI-717182">
        <id>Q9Y6H5</id>
    </interactant>
    <interactant intactId="EBI-985879">
        <id>P37840</id>
        <label>SNCA</label>
    </interactant>
    <organismsDiffer>false</organismsDiffer>
    <experiments>22</experiments>
</comment>
<comment type="interaction">
    <interactant intactId="EBI-717182">
        <id>Q9Y6H5</id>
    </interactant>
    <interactant intactId="EBI-717182">
        <id>Q9Y6H5</id>
        <label>SNCAIP</label>
    </interactant>
    <organismsDiffer>false</organismsDiffer>
    <experiments>5</experiments>
</comment>
<comment type="interaction">
    <interactant intactId="EBI-9075374">
        <id>Q9Y6H5-1</id>
    </interactant>
    <interactant intactId="EBI-9075360">
        <id>O60229-2</id>
        <label>KALRN</label>
    </interactant>
    <organismsDiffer>false</organismsDiffer>
    <experiments>3</experiments>
</comment>
<comment type="interaction">
    <interactant intactId="EBI-15577909">
        <id>Q9Y6H5-2</id>
    </interactant>
    <interactant intactId="EBI-985879">
        <id>P37840</id>
        <label>SNCA</label>
    </interactant>
    <organismsDiffer>false</organismsDiffer>
    <experiments>2</experiments>
</comment>
<comment type="interaction">
    <interactant intactId="EBI-25880040">
        <id>Q9Y6H5-5</id>
    </interactant>
    <interactant intactId="EBI-21251460">
        <id>O60260-5</id>
        <label>PRKN</label>
    </interactant>
    <organismsDiffer>false</organismsDiffer>
    <experiments>6</experiments>
</comment>
<comment type="subcellular location">
    <subcellularLocation>
        <location evidence="3 8 9 12">Cytoplasm</location>
    </subcellularLocation>
    <text>Detected in cytoplasmic inclusion bodies, together with SNCA.</text>
</comment>
<comment type="alternative products">
    <event type="alternative splicing"/>
    <isoform>
        <id>Q9Y6H5-1</id>
        <name>1</name>
        <name>1a</name>
        <sequence type="displayed"/>
    </isoform>
    <isoform>
        <id>Q9Y6H5-2</id>
        <name>2</name>
        <name>Synphilin-1A</name>
        <sequence type="described" ref="VSP_038839 VSP_038842 VSP_038845"/>
    </isoform>
    <isoform>
        <id>Q9Y6H5-3</id>
        <name>3</name>
        <sequence type="described" ref="VSP_038840 VSP_038845"/>
    </isoform>
    <isoform>
        <id>Q9Y6H5-4</id>
        <name>4</name>
        <name>1b</name>
        <sequence type="described" ref="VSP_038841"/>
    </isoform>
    <isoform>
        <id>Q9Y6H5-5</id>
        <name>5</name>
        <sequence type="described" ref="VSP_038839 VSP_038842"/>
    </isoform>
    <isoform>
        <id>Q9Y6H5-6</id>
        <name>6</name>
        <name>1c</name>
        <sequence type="described" ref="VSP_038840 VSP_038843 VSP_038844"/>
    </isoform>
</comment>
<comment type="tissue specificity">
    <text evidence="3 9">Detected in brain (at protein level). Widely expressed, with highest levels in brain, heart and placenta.</text>
</comment>
<comment type="PTM">
    <text evidence="4 5 8">Ubiquitinated; mediated by SIAH1, SIAH2 or RNF19A and leading to its subsequent proteasomal degradation. In the absence of proteasomal degradation, ubiquitinated SNCAIP accumulates in cytoplasmic inclusion bodies. Isoform 2 is subject to limited ubiquitination that does not lead to proteasomal degradation.</text>
</comment>
<comment type="disease" evidence="6">
    <disease id="DI-02134">
        <name>Parkinson disease</name>
        <acronym>PARK</acronym>
        <description>A complex neurodegenerative disorder characterized by bradykinesia, resting tremor, muscular rigidity and postural instability. Additional features are characteristic postural abnormalities, dysautonomia, dystonic cramps, and dementia. The pathology of Parkinson disease involves the loss of dopaminergic neurons in the substantia nigra and the presence of Lewy bodies (intraneuronal accumulations of aggregated proteins), in surviving neurons in various areas of the brain. The disease is progressive and usually manifests after the age of 50 years, although early-onset cases (before 50 years) are known. The majority of the cases are sporadic suggesting a multifactorial etiology based on environmental and genetic factors. However, some patients present with a positive family history for the disease. Familial forms of the disease usually begin at earlier ages and are associated with atypical clinical features.</description>
        <dbReference type="MIM" id="168600"/>
    </disease>
    <text>Disease susceptibility may be associated with variants affecting the gene represented in this entry.</text>
</comment>
<comment type="miscellaneous">
    <text>Constructs encoding portions of SNCA and SNCAIP co-transfected in mammalian cells promote cytosolic inclusions resembling the Lewy bodies of Parkinson disease. Coexpression of SNCA, SNCAIP, and PRKN result in the formation of Lewy body-like. ubiquitin-positive cytosolic inclusions. SNCAIP isoform 2 is particularly aggregation-prone. Familial mutations in PRKN disrupt the ubiquitination of SNCAIP and the formation of the ubiquitin-positive inclusions. These results provide a molecular basis for the ubiquitination of Lewy body-associated proteins and link PRKN and SNCA in a common pathogenic mechanism through their interaction with SNCAIP.</text>
</comment>
<name>SNCAP_HUMAN</name>
<sequence length="919" mass="100409">MEAPEYLDLDEIDFSDDISYSVTSLKTIPELCRRCDTQNEDRSVSSSSWNCGISTLITNTQKPTGIADVYSKFRPVKRVSPLKHQPETLENNESDDQKNQKVVEYQKGGESDLGPQPQELGPGDGVGGPPGKSSEPSTSLGELEHYDLDMDEILDVPYIKSSQQLASFTKVTSEKRILGLCTTINGLSGKACSTGSSESSSSNMAPFCVLSPVKSPHLRKASAVIHDQHKLSTEETEISPPLVKCGSAYEPENQSKDFLNKTFSDPHGRKVEKTTPDCQLRAFHLQSSAAESKPEEQVSGLNRTSSQGPEERSEYLKKVKSILNIVKEGQISLLPHLAADNLDKIHDENGNNLLHIAASQGHAECLQHLTSLMGEDCLNERNTEKLTPAGLAIKNGQLECVRWMVSETEAIAELSCSKDFPSLIHYAGCYGQEKILLWLLQFMQEQGISLDEVDQDGNSAVHVASQHGYLGCIQTLVEYGANVTMQNHAGEKPSQSAERQGHTLCSRYLVVVETCMSLASQVVKLTKQLKEQTVERVTLQNQLQQFLEAQKSEGKSLPSSPSSPSSPASRKSQWKSPDADDDSVAKSKPGVQEGIQVLGSLSASSRARPKAKDEDSDKILRQLLGKEISENVCTQEKLSLEFQDAQASSRNSKKIPLEKRELKLARLRQLMQRSLSESDTDSNNSEDPKTTPVRKADRPRPQPIVESVESMDSAESLHLMIKKHTLASGGRRFPFSIKASKSLDGHSPSPTSESSEPDLESQYPGSGSIPPNQPSGDPQQPSPDSTAAQKVATSPKSALKSPSSKRRTSQNLKLRVTFEEPVVQMEQPSLELNGEKDKDKGRTLQRTSTSNESGDQLKRPFGAFRSIMETLSGNQNNNNNYQAANQLKTSTLPLTSLGRKTDAKGNPASSASKGKNKAA</sequence>
<gene>
    <name type="primary">SNCAIP</name>
</gene>
<proteinExistence type="evidence at protein level"/>
<organism>
    <name type="scientific">Homo sapiens</name>
    <name type="common">Human</name>
    <dbReference type="NCBI Taxonomy" id="9606"/>
    <lineage>
        <taxon>Eukaryota</taxon>
        <taxon>Metazoa</taxon>
        <taxon>Chordata</taxon>
        <taxon>Craniata</taxon>
        <taxon>Vertebrata</taxon>
        <taxon>Euteleostomi</taxon>
        <taxon>Mammalia</taxon>
        <taxon>Eutheria</taxon>
        <taxon>Euarchontoglires</taxon>
        <taxon>Primates</taxon>
        <taxon>Haplorrhini</taxon>
        <taxon>Catarrhini</taxon>
        <taxon>Hominidae</taxon>
        <taxon>Homo</taxon>
    </lineage>
</organism>
<evidence type="ECO:0000255" key="1"/>
<evidence type="ECO:0000256" key="2">
    <source>
        <dbReference type="SAM" id="MobiDB-lite"/>
    </source>
</evidence>
<evidence type="ECO:0000269" key="3">
    <source>
    </source>
</evidence>
<evidence type="ECO:0000269" key="4">
    <source>
    </source>
</evidence>
<evidence type="ECO:0000269" key="5">
    <source>
    </source>
</evidence>
<evidence type="ECO:0000269" key="6">
    <source>
    </source>
</evidence>
<evidence type="ECO:0000269" key="7">
    <source>
    </source>
</evidence>
<evidence type="ECO:0000269" key="8">
    <source>
    </source>
</evidence>
<evidence type="ECO:0000269" key="9">
    <source>
    </source>
</evidence>
<evidence type="ECO:0000269" key="10">
    <source>
    </source>
</evidence>
<evidence type="ECO:0000269" key="11">
    <source>
    </source>
</evidence>
<evidence type="ECO:0000269" key="12">
    <source>
    </source>
</evidence>
<evidence type="ECO:0000269" key="13">
    <source ref="4"/>
</evidence>
<evidence type="ECO:0000303" key="14">
    <source>
    </source>
</evidence>
<evidence type="ECO:0000303" key="15">
    <source>
    </source>
</evidence>
<evidence type="ECO:0000303" key="16">
    <source ref="4"/>
</evidence>
<evidence type="ECO:0000305" key="17"/>
<evidence type="ECO:0007829" key="18">
    <source>
        <dbReference type="PDB" id="2KES"/>
    </source>
</evidence>